<accession>B3A0J4</accession>
<evidence type="ECO:0000250" key="1">
    <source>
        <dbReference type="UniProtKB" id="P82617"/>
    </source>
</evidence>
<evidence type="ECO:0000255" key="2"/>
<evidence type="ECO:0000269" key="3">
    <source>
    </source>
</evidence>
<evidence type="ECO:0000303" key="4">
    <source>
    </source>
</evidence>
<evidence type="ECO:0000305" key="5"/>
<evidence type="ECO:0000305" key="6">
    <source>
    </source>
</evidence>
<proteinExistence type="evidence at protein level"/>
<reference evidence="5" key="1">
    <citation type="journal article" date="2012" name="Syst. Biol.">
        <title>Peptidomics-based phylogeny and biogeography of Mantophasmatodea (Hexapoda).</title>
        <authorList>
            <person name="Predel R."/>
            <person name="Neupert S."/>
            <person name="Huetteroth W."/>
            <person name="Kahnt J."/>
            <person name="Waidelich D."/>
            <person name="Roth S."/>
        </authorList>
    </citation>
    <scope>PROTEIN SEQUENCE</scope>
    <scope>AMIDATION AT LEU-16</scope>
    <source>
        <tissue evidence="3">Abdominal perisympathetic organs</tissue>
    </source>
</reference>
<sequence>NSGGGEGSGMWFGPRL</sequence>
<organism>
    <name type="scientific">Pachyphasma brandbergense</name>
    <name type="common">Gladiator</name>
    <name type="synonym">Heel-walker</name>
    <dbReference type="NCBI Taxonomy" id="1041430"/>
    <lineage>
        <taxon>Eukaryota</taxon>
        <taxon>Metazoa</taxon>
        <taxon>Ecdysozoa</taxon>
        <taxon>Arthropoda</taxon>
        <taxon>Hexapoda</taxon>
        <taxon>Insecta</taxon>
        <taxon>Pterygota</taxon>
        <taxon>Neoptera</taxon>
        <taxon>Polyneoptera</taxon>
        <taxon>Mantophasmatodea</taxon>
        <taxon>Mantophasmatidae</taxon>
        <taxon>Pachyphasma</taxon>
    </lineage>
</organism>
<keyword id="KW-0027">Amidation</keyword>
<keyword id="KW-0903">Direct protein sequencing</keyword>
<keyword id="KW-0527">Neuropeptide</keyword>
<keyword id="KW-0964">Secreted</keyword>
<name>PPK5_PACBA</name>
<dbReference type="GO" id="GO:0005576">
    <property type="term" value="C:extracellular region"/>
    <property type="evidence" value="ECO:0007669"/>
    <property type="project" value="UniProtKB-SubCell"/>
</dbReference>
<dbReference type="GO" id="GO:0005184">
    <property type="term" value="F:neuropeptide hormone activity"/>
    <property type="evidence" value="ECO:0007669"/>
    <property type="project" value="InterPro"/>
</dbReference>
<dbReference type="GO" id="GO:0007218">
    <property type="term" value="P:neuropeptide signaling pathway"/>
    <property type="evidence" value="ECO:0007669"/>
    <property type="project" value="UniProtKB-KW"/>
</dbReference>
<dbReference type="InterPro" id="IPR001484">
    <property type="entry name" value="Pyrokinin_CS"/>
</dbReference>
<dbReference type="PROSITE" id="PS00539">
    <property type="entry name" value="PYROKININ"/>
    <property type="match status" value="1"/>
</dbReference>
<protein>
    <recommendedName>
        <fullName evidence="4">CAPA-Pyrokinin</fullName>
        <shortName evidence="4">CAPA-PK</shortName>
    </recommendedName>
    <alternativeName>
        <fullName evidence="1">FXPRL-amide</fullName>
    </alternativeName>
</protein>
<feature type="peptide" id="PRO_0000421610" description="CAPA-Pyrokinin" evidence="3">
    <location>
        <begin position="1"/>
        <end position="16"/>
    </location>
</feature>
<feature type="modified residue" description="Leucine amide" evidence="3">
    <location>
        <position position="16"/>
    </location>
</feature>
<comment type="function">
    <text evidence="1">Myoactive.</text>
</comment>
<comment type="subcellular location">
    <subcellularLocation>
        <location evidence="6">Secreted</location>
    </subcellularLocation>
</comment>
<comment type="similarity">
    <text evidence="2">Belongs to the pyrokinin family.</text>
</comment>